<gene>
    <name evidence="3" type="primary">yfeX</name>
    <name evidence="5" type="ordered locus">ECs3302</name>
    <name evidence="6" type="ORF">ECpv15279_3233</name>
</gene>
<organism>
    <name type="scientific">Escherichia coli O157:H7</name>
    <dbReference type="NCBI Taxonomy" id="83334"/>
    <lineage>
        <taxon>Bacteria</taxon>
        <taxon>Pseudomonadati</taxon>
        <taxon>Pseudomonadota</taxon>
        <taxon>Gammaproteobacteria</taxon>
        <taxon>Enterobacterales</taxon>
        <taxon>Enterobacteriaceae</taxon>
        <taxon>Escherichia</taxon>
    </lineage>
</organism>
<comment type="function">
    <text evidence="2">Has both general peroxidase activity and dye-decolorizing activity. Can catalyze the oxidation of 2,2'-azino-bis(3-ethylbenzothiazoline-6-sulphonic acid) (ABTS), and the phenolic compounds guaiacol and catechol. Also decolorizes the anthraquinone dye reactive blue 19 (RB19).</text>
</comment>
<comment type="cofactor">
    <cofactor evidence="2">
        <name>heme b</name>
        <dbReference type="ChEBI" id="CHEBI:60344"/>
    </cofactor>
    <text evidence="2">Binds 1 heme b (iron(II)-protoporphyrin IX) group non-covalently.</text>
</comment>
<comment type="subcellular location">
    <subcellularLocation>
        <location evidence="1">Cytoplasm</location>
    </subcellularLocation>
</comment>
<comment type="similarity">
    <text evidence="4">Belongs to the DyP-type peroxidase family.</text>
</comment>
<keyword id="KW-0002">3D-structure</keyword>
<keyword id="KW-0963">Cytoplasm</keyword>
<keyword id="KW-0349">Heme</keyword>
<keyword id="KW-0408">Iron</keyword>
<keyword id="KW-0479">Metal-binding</keyword>
<keyword id="KW-0560">Oxidoreductase</keyword>
<keyword id="KW-0575">Peroxidase</keyword>
<keyword id="KW-1185">Reference proteome</keyword>
<feature type="chain" id="PRO_0000445654" description="Dye-decolorizing peroxidase YfeX">
    <location>
        <begin position="1"/>
        <end position="299"/>
    </location>
</feature>
<feature type="binding site" description="proximal binding residue" evidence="2">
    <location>
        <position position="215"/>
    </location>
    <ligand>
        <name>heme</name>
        <dbReference type="ChEBI" id="CHEBI:30413"/>
    </ligand>
    <ligandPart>
        <name>Fe</name>
        <dbReference type="ChEBI" id="CHEBI:18248"/>
    </ligandPart>
</feature>
<feature type="mutagenesis site" description="Lacks both peroxidase and dye-decolorizing activities." evidence="2">
    <original>D</original>
    <variation>A</variation>
    <variation>N</variation>
    <location>
        <position position="143"/>
    </location>
</feature>
<feature type="mutagenesis site" description="Lacks both peroxidase and dye-decolorizing activities." evidence="2">
    <original>H</original>
    <variation>A</variation>
    <location>
        <position position="215"/>
    </location>
</feature>
<feature type="mutagenesis site" description="Lacks dye-decolorizing activity. Lacks peroxidase activity towards ABTS, but retains activity towards guaiacol and catechol." evidence="2">
    <original>R</original>
    <variation>E</variation>
    <variation>L</variation>
    <location>
        <position position="232"/>
    </location>
</feature>
<feature type="mutagenesis site" description="Lacks both peroxidase and dye-decolorizing activities." evidence="2">
    <original>S</original>
    <variation>Y</variation>
    <location>
        <position position="234"/>
    </location>
</feature>
<feature type="mutagenesis site" description="Lacks both peroxidase and dye-decolorizing activities." evidence="2">
    <original>L</original>
    <variation>W</variation>
    <location>
        <position position="246"/>
    </location>
</feature>
<feature type="strand" evidence="8">
    <location>
        <begin position="14"/>
        <end position="23"/>
    </location>
</feature>
<feature type="helix" evidence="8">
    <location>
        <begin position="27"/>
        <end position="29"/>
    </location>
</feature>
<feature type="helix" evidence="8">
    <location>
        <begin position="30"/>
        <end position="47"/>
    </location>
</feature>
<feature type="helix" evidence="8">
    <location>
        <begin position="49"/>
        <end position="51"/>
    </location>
</feature>
<feature type="strand" evidence="8">
    <location>
        <begin position="54"/>
        <end position="59"/>
    </location>
</feature>
<feature type="helix" evidence="8">
    <location>
        <begin position="61"/>
        <end position="68"/>
    </location>
</feature>
<feature type="strand" evidence="8">
    <location>
        <begin position="70"/>
        <end position="72"/>
    </location>
</feature>
<feature type="turn" evidence="8">
    <location>
        <begin position="83"/>
        <end position="86"/>
    </location>
</feature>
<feature type="strand" evidence="8">
    <location>
        <begin position="93"/>
        <end position="101"/>
    </location>
</feature>
<feature type="helix" evidence="8">
    <location>
        <begin position="103"/>
        <end position="117"/>
    </location>
</feature>
<feature type="turn" evidence="8">
    <location>
        <begin position="118"/>
        <end position="120"/>
    </location>
</feature>
<feature type="strand" evidence="8">
    <location>
        <begin position="121"/>
        <end position="130"/>
    </location>
</feature>
<feature type="helix" evidence="8">
    <location>
        <begin position="133"/>
        <end position="135"/>
    </location>
</feature>
<feature type="strand" evidence="8">
    <location>
        <begin position="140"/>
        <end position="142"/>
    </location>
</feature>
<feature type="helix" evidence="8">
    <location>
        <begin position="151"/>
        <end position="158"/>
    </location>
</feature>
<feature type="turn" evidence="8">
    <location>
        <begin position="164"/>
        <end position="167"/>
    </location>
</feature>
<feature type="strand" evidence="8">
    <location>
        <begin position="169"/>
        <end position="178"/>
    </location>
</feature>
<feature type="helix" evidence="8">
    <location>
        <begin position="180"/>
        <end position="183"/>
    </location>
</feature>
<feature type="helix" evidence="8">
    <location>
        <begin position="188"/>
        <end position="195"/>
    </location>
</feature>
<feature type="turn" evidence="8">
    <location>
        <begin position="199"/>
        <end position="201"/>
    </location>
</feature>
<feature type="helix" evidence="8">
    <location>
        <begin position="215"/>
        <end position="219"/>
    </location>
</feature>
<feature type="strand" evidence="8">
    <location>
        <begin position="235"/>
        <end position="238"/>
    </location>
</feature>
<feature type="strand" evidence="8">
    <location>
        <begin position="240"/>
        <end position="242"/>
    </location>
</feature>
<feature type="strand" evidence="8">
    <location>
        <begin position="244"/>
        <end position="253"/>
    </location>
</feature>
<feature type="helix" evidence="8">
    <location>
        <begin position="255"/>
        <end position="265"/>
    </location>
</feature>
<feature type="strand" evidence="8">
    <location>
        <begin position="268"/>
        <end position="271"/>
    </location>
</feature>
<feature type="helix" evidence="8">
    <location>
        <begin position="275"/>
        <end position="278"/>
    </location>
</feature>
<feature type="strand" evidence="8">
    <location>
        <begin position="280"/>
        <end position="282"/>
    </location>
</feature>
<feature type="strand" evidence="8">
    <location>
        <begin position="286"/>
        <end position="290"/>
    </location>
</feature>
<feature type="turn" evidence="8">
    <location>
        <begin position="293"/>
        <end position="297"/>
    </location>
</feature>
<name>YFEX_ECO57</name>
<proteinExistence type="evidence at protein level"/>
<dbReference type="EC" id="1.11.1.-" evidence="2"/>
<dbReference type="EMBL" id="BA000007">
    <property type="protein sequence ID" value="BAB36725.2"/>
    <property type="molecule type" value="Genomic_DNA"/>
</dbReference>
<dbReference type="EMBL" id="AP018488">
    <property type="protein sequence ID" value="BBC51568.1"/>
    <property type="molecule type" value="Genomic_DNA"/>
</dbReference>
<dbReference type="RefSeq" id="NP_311329.2">
    <property type="nucleotide sequence ID" value="NC_002695.1"/>
</dbReference>
<dbReference type="RefSeq" id="WP_001301804.1">
    <property type="nucleotide sequence ID" value="NZ_VOAI01000001.1"/>
</dbReference>
<dbReference type="PDB" id="5GT2">
    <property type="method" value="X-ray"/>
    <property type="resolution" value="2.09 A"/>
    <property type="chains" value="A/B/C/D=1-299"/>
</dbReference>
<dbReference type="PDBsum" id="5GT2"/>
<dbReference type="SMR" id="Q8XBI9"/>
<dbReference type="STRING" id="155864.Z3696"/>
<dbReference type="PeroxiBase" id="5885">
    <property type="entry name" value="EcoH7DyPrx02"/>
</dbReference>
<dbReference type="GeneID" id="915365"/>
<dbReference type="KEGG" id="ecs:ECs_3302"/>
<dbReference type="PATRIC" id="fig|386585.9.peg.3449"/>
<dbReference type="eggNOG" id="COG2837">
    <property type="taxonomic scope" value="Bacteria"/>
</dbReference>
<dbReference type="HOGENOM" id="CLU_044178_2_0_6"/>
<dbReference type="Proteomes" id="UP000000558">
    <property type="component" value="Chromosome"/>
</dbReference>
<dbReference type="GO" id="GO:0005829">
    <property type="term" value="C:cytosol"/>
    <property type="evidence" value="ECO:0007669"/>
    <property type="project" value="TreeGrafter"/>
</dbReference>
<dbReference type="GO" id="GO:0020037">
    <property type="term" value="F:heme binding"/>
    <property type="evidence" value="ECO:0007669"/>
    <property type="project" value="InterPro"/>
</dbReference>
<dbReference type="GO" id="GO:0046872">
    <property type="term" value="F:metal ion binding"/>
    <property type="evidence" value="ECO:0007669"/>
    <property type="project" value="UniProtKB-KW"/>
</dbReference>
<dbReference type="GO" id="GO:0004601">
    <property type="term" value="F:peroxidase activity"/>
    <property type="evidence" value="ECO:0007669"/>
    <property type="project" value="UniProtKB-KW"/>
</dbReference>
<dbReference type="InterPro" id="IPR011008">
    <property type="entry name" value="Dimeric_a/b-barrel"/>
</dbReference>
<dbReference type="InterPro" id="IPR048328">
    <property type="entry name" value="Dyp_perox_C"/>
</dbReference>
<dbReference type="InterPro" id="IPR048327">
    <property type="entry name" value="Dyp_perox_N"/>
</dbReference>
<dbReference type="InterPro" id="IPR006314">
    <property type="entry name" value="Dyp_peroxidase"/>
</dbReference>
<dbReference type="NCBIfam" id="TIGR01413">
    <property type="entry name" value="Dyp_perox_fam"/>
    <property type="match status" value="1"/>
</dbReference>
<dbReference type="PANTHER" id="PTHR30521">
    <property type="entry name" value="DEFERROCHELATASE/PEROXIDASE"/>
    <property type="match status" value="1"/>
</dbReference>
<dbReference type="PANTHER" id="PTHR30521:SF0">
    <property type="entry name" value="DYP-TYPE PEROXIDASE FAMILY PROTEIN"/>
    <property type="match status" value="1"/>
</dbReference>
<dbReference type="Pfam" id="PF20628">
    <property type="entry name" value="Dyp_perox_C"/>
    <property type="match status" value="1"/>
</dbReference>
<dbReference type="Pfam" id="PF04261">
    <property type="entry name" value="Dyp_perox_N"/>
    <property type="match status" value="1"/>
</dbReference>
<dbReference type="SUPFAM" id="SSF54909">
    <property type="entry name" value="Dimeric alpha+beta barrel"/>
    <property type="match status" value="1"/>
</dbReference>
<dbReference type="PROSITE" id="PS51404">
    <property type="entry name" value="DYP_PEROXIDASE"/>
    <property type="match status" value="1"/>
</dbReference>
<accession>Q8XBI9</accession>
<accession>Q7ABS6</accession>
<evidence type="ECO:0000250" key="1">
    <source>
        <dbReference type="UniProtKB" id="P76536"/>
    </source>
</evidence>
<evidence type="ECO:0000269" key="2">
    <source>
    </source>
</evidence>
<evidence type="ECO:0000303" key="3">
    <source>
    </source>
</evidence>
<evidence type="ECO:0000305" key="4"/>
<evidence type="ECO:0000312" key="5">
    <source>
        <dbReference type="EMBL" id="BAB36725.2"/>
    </source>
</evidence>
<evidence type="ECO:0000312" key="6">
    <source>
        <dbReference type="EMBL" id="BBC51568.1"/>
    </source>
</evidence>
<evidence type="ECO:0007744" key="7">
    <source>
        <dbReference type="PDB" id="5GT2"/>
    </source>
</evidence>
<evidence type="ECO:0007829" key="8">
    <source>
        <dbReference type="PDB" id="5GT2"/>
    </source>
</evidence>
<sequence>MSQVQSGILPEHCRAAIWIEANVKGEVDALRAASKTFADKLATFEAKFPDAHLGAVVAFGNNIWRALSGGVGAEELKDFPGYGKGLAPTTQFDVLIHILSLRHDVNFSVAQAAMEAFGDCIEVKEEIHGFRWVEERDLSGFVDGTENPAGEETRREVAVIKDGVDAGGSYVFVQRWEHNLKQLNRMSVHDQEMMIGRTKEANEEIDGDERPETSHLTRVDLKEDGKGLKIVRQSLPYGTASGTHGLYFCAYCARLHNIEQQLLSMFGDTDGKRDAMLRFTKPVTGGYYFAPSLDKLMAL</sequence>
<protein>
    <recommendedName>
        <fullName evidence="3">Dye-decolorizing peroxidase YfeX</fullName>
        <ecNumber evidence="2">1.11.1.-</ecNumber>
    </recommendedName>
</protein>
<reference key="1">
    <citation type="journal article" date="2001" name="DNA Res.">
        <title>Complete genome sequence of enterohemorrhagic Escherichia coli O157:H7 and genomic comparison with a laboratory strain K-12.</title>
        <authorList>
            <person name="Hayashi T."/>
            <person name="Makino K."/>
            <person name="Ohnishi M."/>
            <person name="Kurokawa K."/>
            <person name="Ishii K."/>
            <person name="Yokoyama K."/>
            <person name="Han C.-G."/>
            <person name="Ohtsubo E."/>
            <person name="Nakayama K."/>
            <person name="Murata T."/>
            <person name="Tanaka M."/>
            <person name="Tobe T."/>
            <person name="Iida T."/>
            <person name="Takami H."/>
            <person name="Honda T."/>
            <person name="Sasakawa C."/>
            <person name="Ogasawara N."/>
            <person name="Yasunaga T."/>
            <person name="Kuhara S."/>
            <person name="Shiba T."/>
            <person name="Hattori M."/>
            <person name="Shinagawa H."/>
        </authorList>
    </citation>
    <scope>NUCLEOTIDE SEQUENCE [LARGE SCALE GENOMIC DNA]</scope>
    <source>
        <strain>O157:H7 / Sakai / RIMD 0509952 / EHEC</strain>
    </source>
</reference>
<reference key="2">
    <citation type="submission" date="2018-01" db="EMBL/GenBank/DDBJ databases">
        <title>Genomic characterization of a non-sorbitol-fermenting and b-glucuronidase-positive O157:H7 strain.</title>
        <authorList>
            <person name="Ogura Y."/>
            <person name="Seto K."/>
            <person name="Morimoto Y."/>
            <person name="Nakamura K."/>
            <person name="Gotoh Y."/>
            <person name="Toyoda A."/>
            <person name="Itoh T."/>
            <person name="Ohnishi M."/>
            <person name="Hayashi T."/>
        </authorList>
    </citation>
    <scope>NUCLEOTIDE SEQUENCE [LARGE SCALE GENOMIC DNA]</scope>
    <source>
        <strain>O157:H7 / Pv15-279</strain>
    </source>
</reference>
<reference evidence="7" key="3">
    <citation type="journal article" date="2017" name="Biochem. Biophys. Res. Commun.">
        <title>Crystal structure and biochemical features of dye-decolorizing peroxidase YfeX from Escherichia coli O157 Asp143 and Arg232 play divergent roles toward different substrates.</title>
        <authorList>
            <person name="Liu X."/>
            <person name="Yuan Z."/>
            <person name="Wang J."/>
            <person name="Cui Y."/>
            <person name="Liu S."/>
            <person name="Ma Y."/>
            <person name="Gu L."/>
            <person name="Xu S."/>
        </authorList>
    </citation>
    <scope>X-RAY CRYSTALLOGRAPHY (2.09 ANGSTROMS) IN COMPLEX WITH HEME</scope>
    <scope>FUNCTION</scope>
    <scope>COFACTOR</scope>
    <scope>MUTAGENESIS OF ASP-143; HIS-215; ARG-232; SER-234 AND LEU-246</scope>
    <source>
        <strain>O157:H7 / Sakai / RIMD 0509952 / EHEC</strain>
    </source>
</reference>